<sequence length="432" mass="47583">MDIRQLCGNAGVASVKMAALSGEVKNNALMKIADALLANSKRIIEANQHDLERSEKENLASPLLKRLKFDEKKINDVVEGIKSLMALEEPIGKTLLANKLDDELELYKVTCPIGVIGIIFESRPDALVQISTLCLKSGNCVLLKGGSEAKETNRVLTGVIEEATVAAGLPKGWIGLLESRDDVNEMLKMDQFIDLIIPRGSNDFVRYIMDNSRIPVMGHADGICHVYVDESADLEMAKKITVDSKTQYVAVCNATETLLVDRAVAKEFLPGLKAELDKKNVEIFGDEETADIIEVKPASDQDWATEYLDYIISIKIVAGMDEAIKHIITYGSGHTDCIVTKDKAKAVNFMNLVDSGNVFWNASTRFSDGFKYGFGAEVGISTSKLHARGPVGLDGLLSYKYMLIGNGQIVDDYATNKRQFKHERMNKQIDEI</sequence>
<organism>
    <name type="scientific">Ruminiclostridium cellulolyticum (strain ATCC 35319 / DSM 5812 / JCM 6584 / H10)</name>
    <name type="common">Clostridium cellulolyticum</name>
    <dbReference type="NCBI Taxonomy" id="394503"/>
    <lineage>
        <taxon>Bacteria</taxon>
        <taxon>Bacillati</taxon>
        <taxon>Bacillota</taxon>
        <taxon>Clostridia</taxon>
        <taxon>Eubacteriales</taxon>
        <taxon>Oscillospiraceae</taxon>
        <taxon>Ruminiclostridium</taxon>
    </lineage>
</organism>
<protein>
    <recommendedName>
        <fullName evidence="1">Gamma-glutamyl phosphate reductase</fullName>
        <shortName evidence="1">GPR</shortName>
        <ecNumber evidence="1">1.2.1.41</ecNumber>
    </recommendedName>
    <alternativeName>
        <fullName evidence="1">Glutamate-5-semialdehyde dehydrogenase</fullName>
    </alternativeName>
    <alternativeName>
        <fullName evidence="1">Glutamyl-gamma-semialdehyde dehydrogenase</fullName>
        <shortName evidence="1">GSA dehydrogenase</shortName>
    </alternativeName>
</protein>
<accession>B8I6T0</accession>
<reference key="1">
    <citation type="submission" date="2009-01" db="EMBL/GenBank/DDBJ databases">
        <title>Complete sequence of Clostridium cellulolyticum H10.</title>
        <authorList>
            <consortium name="US DOE Joint Genome Institute"/>
            <person name="Lucas S."/>
            <person name="Copeland A."/>
            <person name="Lapidus A."/>
            <person name="Glavina del Rio T."/>
            <person name="Dalin E."/>
            <person name="Tice H."/>
            <person name="Bruce D."/>
            <person name="Goodwin L."/>
            <person name="Pitluck S."/>
            <person name="Chertkov O."/>
            <person name="Saunders E."/>
            <person name="Brettin T."/>
            <person name="Detter J.C."/>
            <person name="Han C."/>
            <person name="Larimer F."/>
            <person name="Land M."/>
            <person name="Hauser L."/>
            <person name="Kyrpides N."/>
            <person name="Ivanova N."/>
            <person name="Zhou J."/>
            <person name="Richardson P."/>
        </authorList>
    </citation>
    <scope>NUCLEOTIDE SEQUENCE [LARGE SCALE GENOMIC DNA]</scope>
    <source>
        <strain>ATCC 35319 / DSM 5812 / JCM 6584 / H10</strain>
    </source>
</reference>
<proteinExistence type="inferred from homology"/>
<keyword id="KW-0028">Amino-acid biosynthesis</keyword>
<keyword id="KW-0963">Cytoplasm</keyword>
<keyword id="KW-0521">NADP</keyword>
<keyword id="KW-0560">Oxidoreductase</keyword>
<keyword id="KW-0641">Proline biosynthesis</keyword>
<keyword id="KW-1185">Reference proteome</keyword>
<name>PROA_RUMCH</name>
<dbReference type="EC" id="1.2.1.41" evidence="1"/>
<dbReference type="EMBL" id="CP001348">
    <property type="protein sequence ID" value="ACL76922.1"/>
    <property type="molecule type" value="Genomic_DNA"/>
</dbReference>
<dbReference type="RefSeq" id="WP_015926009.1">
    <property type="nucleotide sequence ID" value="NC_011898.1"/>
</dbReference>
<dbReference type="SMR" id="B8I6T0"/>
<dbReference type="STRING" id="394503.Ccel_2594"/>
<dbReference type="KEGG" id="cce:Ccel_2594"/>
<dbReference type="eggNOG" id="COG0014">
    <property type="taxonomic scope" value="Bacteria"/>
</dbReference>
<dbReference type="HOGENOM" id="CLU_030231_0_1_9"/>
<dbReference type="OrthoDB" id="9809970at2"/>
<dbReference type="UniPathway" id="UPA00098">
    <property type="reaction ID" value="UER00360"/>
</dbReference>
<dbReference type="Proteomes" id="UP000001349">
    <property type="component" value="Chromosome"/>
</dbReference>
<dbReference type="GO" id="GO:0005737">
    <property type="term" value="C:cytoplasm"/>
    <property type="evidence" value="ECO:0007669"/>
    <property type="project" value="UniProtKB-SubCell"/>
</dbReference>
<dbReference type="GO" id="GO:0004350">
    <property type="term" value="F:glutamate-5-semialdehyde dehydrogenase activity"/>
    <property type="evidence" value="ECO:0007669"/>
    <property type="project" value="UniProtKB-UniRule"/>
</dbReference>
<dbReference type="GO" id="GO:0050661">
    <property type="term" value="F:NADP binding"/>
    <property type="evidence" value="ECO:0007669"/>
    <property type="project" value="InterPro"/>
</dbReference>
<dbReference type="GO" id="GO:0055129">
    <property type="term" value="P:L-proline biosynthetic process"/>
    <property type="evidence" value="ECO:0007669"/>
    <property type="project" value="UniProtKB-UniRule"/>
</dbReference>
<dbReference type="CDD" id="cd07079">
    <property type="entry name" value="ALDH_F18-19_ProA-GPR"/>
    <property type="match status" value="1"/>
</dbReference>
<dbReference type="FunFam" id="3.40.309.10:FF:000006">
    <property type="entry name" value="Gamma-glutamyl phosphate reductase"/>
    <property type="match status" value="1"/>
</dbReference>
<dbReference type="Gene3D" id="3.40.605.10">
    <property type="entry name" value="Aldehyde Dehydrogenase, Chain A, domain 1"/>
    <property type="match status" value="1"/>
</dbReference>
<dbReference type="Gene3D" id="3.40.309.10">
    <property type="entry name" value="Aldehyde Dehydrogenase, Chain A, domain 2"/>
    <property type="match status" value="1"/>
</dbReference>
<dbReference type="HAMAP" id="MF_00412">
    <property type="entry name" value="ProA"/>
    <property type="match status" value="1"/>
</dbReference>
<dbReference type="InterPro" id="IPR016161">
    <property type="entry name" value="Ald_DH/histidinol_DH"/>
</dbReference>
<dbReference type="InterPro" id="IPR016163">
    <property type="entry name" value="Ald_DH_C"/>
</dbReference>
<dbReference type="InterPro" id="IPR016162">
    <property type="entry name" value="Ald_DH_N"/>
</dbReference>
<dbReference type="InterPro" id="IPR015590">
    <property type="entry name" value="Aldehyde_DH_dom"/>
</dbReference>
<dbReference type="InterPro" id="IPR020593">
    <property type="entry name" value="G-glutamylP_reductase_CS"/>
</dbReference>
<dbReference type="InterPro" id="IPR012134">
    <property type="entry name" value="Glu-5-SA_DH"/>
</dbReference>
<dbReference type="InterPro" id="IPR000965">
    <property type="entry name" value="GPR_dom"/>
</dbReference>
<dbReference type="NCBIfam" id="NF001221">
    <property type="entry name" value="PRK00197.1"/>
    <property type="match status" value="1"/>
</dbReference>
<dbReference type="NCBIfam" id="TIGR00407">
    <property type="entry name" value="proA"/>
    <property type="match status" value="1"/>
</dbReference>
<dbReference type="PANTHER" id="PTHR11063:SF8">
    <property type="entry name" value="DELTA-1-PYRROLINE-5-CARBOXYLATE SYNTHASE"/>
    <property type="match status" value="1"/>
</dbReference>
<dbReference type="PANTHER" id="PTHR11063">
    <property type="entry name" value="GLUTAMATE SEMIALDEHYDE DEHYDROGENASE"/>
    <property type="match status" value="1"/>
</dbReference>
<dbReference type="Pfam" id="PF00171">
    <property type="entry name" value="Aldedh"/>
    <property type="match status" value="1"/>
</dbReference>
<dbReference type="PIRSF" id="PIRSF000151">
    <property type="entry name" value="GPR"/>
    <property type="match status" value="1"/>
</dbReference>
<dbReference type="SUPFAM" id="SSF53720">
    <property type="entry name" value="ALDH-like"/>
    <property type="match status" value="1"/>
</dbReference>
<dbReference type="PROSITE" id="PS01223">
    <property type="entry name" value="PROA"/>
    <property type="match status" value="1"/>
</dbReference>
<feature type="chain" id="PRO_1000193589" description="Gamma-glutamyl phosphate reductase">
    <location>
        <begin position="1"/>
        <end position="432"/>
    </location>
</feature>
<comment type="function">
    <text evidence="1">Catalyzes the NADPH-dependent reduction of L-glutamate 5-phosphate into L-glutamate 5-semialdehyde and phosphate. The product spontaneously undergoes cyclization to form 1-pyrroline-5-carboxylate.</text>
</comment>
<comment type="catalytic activity">
    <reaction evidence="1">
        <text>L-glutamate 5-semialdehyde + phosphate + NADP(+) = L-glutamyl 5-phosphate + NADPH + H(+)</text>
        <dbReference type="Rhea" id="RHEA:19541"/>
        <dbReference type="ChEBI" id="CHEBI:15378"/>
        <dbReference type="ChEBI" id="CHEBI:43474"/>
        <dbReference type="ChEBI" id="CHEBI:57783"/>
        <dbReference type="ChEBI" id="CHEBI:58066"/>
        <dbReference type="ChEBI" id="CHEBI:58274"/>
        <dbReference type="ChEBI" id="CHEBI:58349"/>
        <dbReference type="EC" id="1.2.1.41"/>
    </reaction>
</comment>
<comment type="pathway">
    <text evidence="1">Amino-acid biosynthesis; L-proline biosynthesis; L-glutamate 5-semialdehyde from L-glutamate: step 2/2.</text>
</comment>
<comment type="subcellular location">
    <subcellularLocation>
        <location evidence="1">Cytoplasm</location>
    </subcellularLocation>
</comment>
<comment type="similarity">
    <text evidence="1">Belongs to the gamma-glutamyl phosphate reductase family.</text>
</comment>
<gene>
    <name evidence="1" type="primary">proA</name>
    <name type="ordered locus">Ccel_2594</name>
</gene>
<evidence type="ECO:0000255" key="1">
    <source>
        <dbReference type="HAMAP-Rule" id="MF_00412"/>
    </source>
</evidence>